<keyword id="KW-0030">Aminoacyl-tRNA synthetase</keyword>
<keyword id="KW-0067">ATP-binding</keyword>
<keyword id="KW-0963">Cytoplasm</keyword>
<keyword id="KW-0436">Ligase</keyword>
<keyword id="KW-0547">Nucleotide-binding</keyword>
<keyword id="KW-0648">Protein biosynthesis</keyword>
<keyword id="KW-1185">Reference proteome</keyword>
<evidence type="ECO:0000255" key="1">
    <source>
        <dbReference type="HAMAP-Rule" id="MF_00049"/>
    </source>
</evidence>
<gene>
    <name evidence="1" type="primary">leuS</name>
    <name type="ordered locus">Nwi_0091</name>
</gene>
<sequence length="883" mass="98985">MTSERYNARDAEPRWQAEWDRQAIFATKNDDPREKYYVLEMFPYPSGRIHIGHVRNYTLGDVIARYMRARGYNVLHPMGWDAFGLPAENAAIERKIAPKAWTYDNIKAMKKQLRSIGLSLDWSREIATCDPAYYKHQQKMFLDFLRAGLAEREKRKINWDPVDMTVLANEQVIDGRGWRSGAVVEQREMNQWVFKITKFSQELLDALGTLDRWPDKVRLMQRNWIGRSEGLLIRFALDATTTPNNESELKIFTTRPDTLFGARFMAIAPDHPLAQAAAKDNPALAGFIAECKQRGTAQAEIDTAEKMGFDTGIRAIHPFDAAWALPVYVANFILMEYGTGAIFGCPAHDQRDLDFVNKYGLGNTPVVCPEGQDPASFVITDTAYDGDGRMINSRFLDGMSADAAKEEVAKRLEGETRGNEPVAERKVNFRLRDWGISRQRYWGCPIPVIHCPNCDVVPVPEKDLPVTLPEDVTFDRPGNALDHHPTWKHVDCPKCGGKATRETDTMDTFVDSSWYFARFTDPWNDSAPTTREVADRMLPVDQYIGGVEHAILHLLYSRFFTRAMKATGHLGMDEPFKGMFTQGMVVHETYRKPDGGWASPEEVRIEVDGNNRRATLITTGEPVEIGAVEKMSKSKRNTVDPDDIIGSYGADTARWFMLSDSPPDRDVIWSEEGVQGAARFMQRLWRLVNEAADAGKAAPQDRPATFGSDALTLRKAAHGALDRVSTGIERLHFNVCLANIREFANELADALARSRSNKSAPARDLAPDLSWSLREAAIILVQIFSPMMPHLAEECWQRALGQTGLVSQARWPQIEPDLLIEDSITLPVQVNGKKRGEVTVASDAGNPEIEAAVLALDAVKQALGGKQARKIIIVPRRIVSVVG</sequence>
<name>SYL_NITWN</name>
<accession>Q3SWI2</accession>
<comment type="catalytic activity">
    <reaction evidence="1">
        <text>tRNA(Leu) + L-leucine + ATP = L-leucyl-tRNA(Leu) + AMP + diphosphate</text>
        <dbReference type="Rhea" id="RHEA:11688"/>
        <dbReference type="Rhea" id="RHEA-COMP:9613"/>
        <dbReference type="Rhea" id="RHEA-COMP:9622"/>
        <dbReference type="ChEBI" id="CHEBI:30616"/>
        <dbReference type="ChEBI" id="CHEBI:33019"/>
        <dbReference type="ChEBI" id="CHEBI:57427"/>
        <dbReference type="ChEBI" id="CHEBI:78442"/>
        <dbReference type="ChEBI" id="CHEBI:78494"/>
        <dbReference type="ChEBI" id="CHEBI:456215"/>
        <dbReference type="EC" id="6.1.1.4"/>
    </reaction>
</comment>
<comment type="subcellular location">
    <subcellularLocation>
        <location evidence="1">Cytoplasm</location>
    </subcellularLocation>
</comment>
<comment type="similarity">
    <text evidence="1">Belongs to the class-I aminoacyl-tRNA synthetase family.</text>
</comment>
<proteinExistence type="inferred from homology"/>
<feature type="chain" id="PRO_1000009383" description="Leucine--tRNA ligase">
    <location>
        <begin position="1"/>
        <end position="883"/>
    </location>
</feature>
<feature type="short sequence motif" description="'HIGH' region">
    <location>
        <begin position="43"/>
        <end position="53"/>
    </location>
</feature>
<feature type="short sequence motif" description="'KMSKS' region">
    <location>
        <begin position="630"/>
        <end position="634"/>
    </location>
</feature>
<feature type="binding site" evidence="1">
    <location>
        <position position="633"/>
    </location>
    <ligand>
        <name>ATP</name>
        <dbReference type="ChEBI" id="CHEBI:30616"/>
    </ligand>
</feature>
<organism>
    <name type="scientific">Nitrobacter winogradskyi (strain ATCC 25391 / DSM 10237 / CIP 104748 / NCIMB 11846 / Nb-255)</name>
    <dbReference type="NCBI Taxonomy" id="323098"/>
    <lineage>
        <taxon>Bacteria</taxon>
        <taxon>Pseudomonadati</taxon>
        <taxon>Pseudomonadota</taxon>
        <taxon>Alphaproteobacteria</taxon>
        <taxon>Hyphomicrobiales</taxon>
        <taxon>Nitrobacteraceae</taxon>
        <taxon>Nitrobacter</taxon>
    </lineage>
</organism>
<dbReference type="EC" id="6.1.1.4" evidence="1"/>
<dbReference type="EMBL" id="CP000115">
    <property type="protein sequence ID" value="ABA03359.1"/>
    <property type="molecule type" value="Genomic_DNA"/>
</dbReference>
<dbReference type="RefSeq" id="WP_011313428.1">
    <property type="nucleotide sequence ID" value="NC_007406.1"/>
</dbReference>
<dbReference type="SMR" id="Q3SWI2"/>
<dbReference type="STRING" id="323098.Nwi_0091"/>
<dbReference type="KEGG" id="nwi:Nwi_0091"/>
<dbReference type="eggNOG" id="COG0495">
    <property type="taxonomic scope" value="Bacteria"/>
</dbReference>
<dbReference type="HOGENOM" id="CLU_004427_0_0_5"/>
<dbReference type="OrthoDB" id="9810365at2"/>
<dbReference type="Proteomes" id="UP000002531">
    <property type="component" value="Chromosome"/>
</dbReference>
<dbReference type="GO" id="GO:0005829">
    <property type="term" value="C:cytosol"/>
    <property type="evidence" value="ECO:0007669"/>
    <property type="project" value="TreeGrafter"/>
</dbReference>
<dbReference type="GO" id="GO:0002161">
    <property type="term" value="F:aminoacyl-tRNA deacylase activity"/>
    <property type="evidence" value="ECO:0007669"/>
    <property type="project" value="InterPro"/>
</dbReference>
<dbReference type="GO" id="GO:0005524">
    <property type="term" value="F:ATP binding"/>
    <property type="evidence" value="ECO:0007669"/>
    <property type="project" value="UniProtKB-UniRule"/>
</dbReference>
<dbReference type="GO" id="GO:0004823">
    <property type="term" value="F:leucine-tRNA ligase activity"/>
    <property type="evidence" value="ECO:0007669"/>
    <property type="project" value="UniProtKB-UniRule"/>
</dbReference>
<dbReference type="GO" id="GO:0006429">
    <property type="term" value="P:leucyl-tRNA aminoacylation"/>
    <property type="evidence" value="ECO:0007669"/>
    <property type="project" value="UniProtKB-UniRule"/>
</dbReference>
<dbReference type="CDD" id="cd07958">
    <property type="entry name" value="Anticodon_Ia_Leu_BEm"/>
    <property type="match status" value="1"/>
</dbReference>
<dbReference type="CDD" id="cd00812">
    <property type="entry name" value="LeuRS_core"/>
    <property type="match status" value="1"/>
</dbReference>
<dbReference type="FunFam" id="1.10.730.10:FF:000002">
    <property type="entry name" value="Leucine--tRNA ligase"/>
    <property type="match status" value="1"/>
</dbReference>
<dbReference type="FunFam" id="3.40.50.620:FF:000003">
    <property type="entry name" value="Leucine--tRNA ligase"/>
    <property type="match status" value="1"/>
</dbReference>
<dbReference type="Gene3D" id="2.20.28.290">
    <property type="match status" value="1"/>
</dbReference>
<dbReference type="Gene3D" id="3.10.20.590">
    <property type="match status" value="1"/>
</dbReference>
<dbReference type="Gene3D" id="3.40.50.620">
    <property type="entry name" value="HUPs"/>
    <property type="match status" value="2"/>
</dbReference>
<dbReference type="Gene3D" id="1.10.730.10">
    <property type="entry name" value="Isoleucyl-tRNA Synthetase, Domain 1"/>
    <property type="match status" value="2"/>
</dbReference>
<dbReference type="HAMAP" id="MF_00049_B">
    <property type="entry name" value="Leu_tRNA_synth_B"/>
    <property type="match status" value="1"/>
</dbReference>
<dbReference type="InterPro" id="IPR001412">
    <property type="entry name" value="aa-tRNA-synth_I_CS"/>
</dbReference>
<dbReference type="InterPro" id="IPR002300">
    <property type="entry name" value="aa-tRNA-synth_Ia"/>
</dbReference>
<dbReference type="InterPro" id="IPR002302">
    <property type="entry name" value="Leu-tRNA-ligase"/>
</dbReference>
<dbReference type="InterPro" id="IPR025709">
    <property type="entry name" value="Leu_tRNA-synth_edit"/>
</dbReference>
<dbReference type="InterPro" id="IPR013155">
    <property type="entry name" value="M/V/L/I-tRNA-synth_anticd-bd"/>
</dbReference>
<dbReference type="InterPro" id="IPR015413">
    <property type="entry name" value="Methionyl/Leucyl_tRNA_Synth"/>
</dbReference>
<dbReference type="InterPro" id="IPR014729">
    <property type="entry name" value="Rossmann-like_a/b/a_fold"/>
</dbReference>
<dbReference type="InterPro" id="IPR009080">
    <property type="entry name" value="tRNAsynth_Ia_anticodon-bd"/>
</dbReference>
<dbReference type="InterPro" id="IPR009008">
    <property type="entry name" value="Val/Leu/Ile-tRNA-synth_edit"/>
</dbReference>
<dbReference type="NCBIfam" id="TIGR00396">
    <property type="entry name" value="leuS_bact"/>
    <property type="match status" value="1"/>
</dbReference>
<dbReference type="PANTHER" id="PTHR43740:SF2">
    <property type="entry name" value="LEUCINE--TRNA LIGASE, MITOCHONDRIAL"/>
    <property type="match status" value="1"/>
</dbReference>
<dbReference type="PANTHER" id="PTHR43740">
    <property type="entry name" value="LEUCYL-TRNA SYNTHETASE"/>
    <property type="match status" value="1"/>
</dbReference>
<dbReference type="Pfam" id="PF08264">
    <property type="entry name" value="Anticodon_1"/>
    <property type="match status" value="1"/>
</dbReference>
<dbReference type="Pfam" id="PF00133">
    <property type="entry name" value="tRNA-synt_1"/>
    <property type="match status" value="2"/>
</dbReference>
<dbReference type="Pfam" id="PF13603">
    <property type="entry name" value="tRNA-synt_1_2"/>
    <property type="match status" value="1"/>
</dbReference>
<dbReference type="Pfam" id="PF09334">
    <property type="entry name" value="tRNA-synt_1g"/>
    <property type="match status" value="1"/>
</dbReference>
<dbReference type="PRINTS" id="PR00985">
    <property type="entry name" value="TRNASYNTHLEU"/>
</dbReference>
<dbReference type="SUPFAM" id="SSF47323">
    <property type="entry name" value="Anticodon-binding domain of a subclass of class I aminoacyl-tRNA synthetases"/>
    <property type="match status" value="1"/>
</dbReference>
<dbReference type="SUPFAM" id="SSF52374">
    <property type="entry name" value="Nucleotidylyl transferase"/>
    <property type="match status" value="1"/>
</dbReference>
<dbReference type="SUPFAM" id="SSF50677">
    <property type="entry name" value="ValRS/IleRS/LeuRS editing domain"/>
    <property type="match status" value="1"/>
</dbReference>
<dbReference type="PROSITE" id="PS00178">
    <property type="entry name" value="AA_TRNA_LIGASE_I"/>
    <property type="match status" value="1"/>
</dbReference>
<protein>
    <recommendedName>
        <fullName evidence="1">Leucine--tRNA ligase</fullName>
        <ecNumber evidence="1">6.1.1.4</ecNumber>
    </recommendedName>
    <alternativeName>
        <fullName evidence="1">Leucyl-tRNA synthetase</fullName>
        <shortName evidence="1">LeuRS</shortName>
    </alternativeName>
</protein>
<reference key="1">
    <citation type="journal article" date="2006" name="Appl. Environ. Microbiol.">
        <title>Genome sequence of the chemolithoautotrophic nitrite-oxidizing bacterium Nitrobacter winogradskyi Nb-255.</title>
        <authorList>
            <person name="Starkenburg S.R."/>
            <person name="Chain P.S.G."/>
            <person name="Sayavedra-Soto L.A."/>
            <person name="Hauser L."/>
            <person name="Land M.L."/>
            <person name="Larimer F.W."/>
            <person name="Malfatti S.A."/>
            <person name="Klotz M.G."/>
            <person name="Bottomley P.J."/>
            <person name="Arp D.J."/>
            <person name="Hickey W.J."/>
        </authorList>
    </citation>
    <scope>NUCLEOTIDE SEQUENCE [LARGE SCALE GENOMIC DNA]</scope>
    <source>
        <strain>ATCC 25391 / DSM 10237 / CIP 104748 / NCIMB 11846 / Nb-255</strain>
    </source>
</reference>